<gene>
    <name type="primary">CSY2</name>
    <name type="ordered locus">At3g58750</name>
    <name type="ORF">T20N10.100</name>
</gene>
<name>CISY2_ARATH</name>
<reference key="1">
    <citation type="journal article" date="2000" name="Nature">
        <title>Sequence and analysis of chromosome 3 of the plant Arabidopsis thaliana.</title>
        <authorList>
            <person name="Salanoubat M."/>
            <person name="Lemcke K."/>
            <person name="Rieger M."/>
            <person name="Ansorge W."/>
            <person name="Unseld M."/>
            <person name="Fartmann B."/>
            <person name="Valle G."/>
            <person name="Bloecker H."/>
            <person name="Perez-Alonso M."/>
            <person name="Obermaier B."/>
            <person name="Delseny M."/>
            <person name="Boutry M."/>
            <person name="Grivell L.A."/>
            <person name="Mache R."/>
            <person name="Puigdomenech P."/>
            <person name="De Simone V."/>
            <person name="Choisne N."/>
            <person name="Artiguenave F."/>
            <person name="Robert C."/>
            <person name="Brottier P."/>
            <person name="Wincker P."/>
            <person name="Cattolico L."/>
            <person name="Weissenbach J."/>
            <person name="Saurin W."/>
            <person name="Quetier F."/>
            <person name="Schaefer M."/>
            <person name="Mueller-Auer S."/>
            <person name="Gabel C."/>
            <person name="Fuchs M."/>
            <person name="Benes V."/>
            <person name="Wurmbach E."/>
            <person name="Drzonek H."/>
            <person name="Erfle H."/>
            <person name="Jordan N."/>
            <person name="Bangert S."/>
            <person name="Wiedelmann R."/>
            <person name="Kranz H."/>
            <person name="Voss H."/>
            <person name="Holland R."/>
            <person name="Brandt P."/>
            <person name="Nyakatura G."/>
            <person name="Vezzi A."/>
            <person name="D'Angelo M."/>
            <person name="Pallavicini A."/>
            <person name="Toppo S."/>
            <person name="Simionati B."/>
            <person name="Conrad A."/>
            <person name="Hornischer K."/>
            <person name="Kauer G."/>
            <person name="Loehnert T.-H."/>
            <person name="Nordsiek G."/>
            <person name="Reichelt J."/>
            <person name="Scharfe M."/>
            <person name="Schoen O."/>
            <person name="Bargues M."/>
            <person name="Terol J."/>
            <person name="Climent J."/>
            <person name="Navarro P."/>
            <person name="Collado C."/>
            <person name="Perez-Perez A."/>
            <person name="Ottenwaelder B."/>
            <person name="Duchemin D."/>
            <person name="Cooke R."/>
            <person name="Laudie M."/>
            <person name="Berger-Llauro C."/>
            <person name="Purnelle B."/>
            <person name="Masuy D."/>
            <person name="de Haan M."/>
            <person name="Maarse A.C."/>
            <person name="Alcaraz J.-P."/>
            <person name="Cottet A."/>
            <person name="Casacuberta E."/>
            <person name="Monfort A."/>
            <person name="Argiriou A."/>
            <person name="Flores M."/>
            <person name="Liguori R."/>
            <person name="Vitale D."/>
            <person name="Mannhaupt G."/>
            <person name="Haase D."/>
            <person name="Schoof H."/>
            <person name="Rudd S."/>
            <person name="Zaccaria P."/>
            <person name="Mewes H.-W."/>
            <person name="Mayer K.F.X."/>
            <person name="Kaul S."/>
            <person name="Town C.D."/>
            <person name="Koo H.L."/>
            <person name="Tallon L.J."/>
            <person name="Jenkins J."/>
            <person name="Rooney T."/>
            <person name="Rizzo M."/>
            <person name="Walts A."/>
            <person name="Utterback T."/>
            <person name="Fujii C.Y."/>
            <person name="Shea T.P."/>
            <person name="Creasy T.H."/>
            <person name="Haas B."/>
            <person name="Maiti R."/>
            <person name="Wu D."/>
            <person name="Peterson J."/>
            <person name="Van Aken S."/>
            <person name="Pai G."/>
            <person name="Militscher J."/>
            <person name="Sellers P."/>
            <person name="Gill J.E."/>
            <person name="Feldblyum T.V."/>
            <person name="Preuss D."/>
            <person name="Lin X."/>
            <person name="Nierman W.C."/>
            <person name="Salzberg S.L."/>
            <person name="White O."/>
            <person name="Venter J.C."/>
            <person name="Fraser C.M."/>
            <person name="Kaneko T."/>
            <person name="Nakamura Y."/>
            <person name="Sato S."/>
            <person name="Kato T."/>
            <person name="Asamizu E."/>
            <person name="Sasamoto S."/>
            <person name="Kimura T."/>
            <person name="Idesawa K."/>
            <person name="Kawashima K."/>
            <person name="Kishida Y."/>
            <person name="Kiyokawa C."/>
            <person name="Kohara M."/>
            <person name="Matsumoto M."/>
            <person name="Matsuno A."/>
            <person name="Muraki A."/>
            <person name="Nakayama S."/>
            <person name="Nakazaki N."/>
            <person name="Shinpo S."/>
            <person name="Takeuchi C."/>
            <person name="Wada T."/>
            <person name="Watanabe A."/>
            <person name="Yamada M."/>
            <person name="Yasuda M."/>
            <person name="Tabata S."/>
        </authorList>
    </citation>
    <scope>NUCLEOTIDE SEQUENCE [LARGE SCALE GENOMIC DNA]</scope>
    <source>
        <strain>cv. Columbia</strain>
    </source>
</reference>
<reference key="2">
    <citation type="journal article" date="2017" name="Plant J.">
        <title>Araport11: a complete reannotation of the Arabidopsis thaliana reference genome.</title>
        <authorList>
            <person name="Cheng C.Y."/>
            <person name="Krishnakumar V."/>
            <person name="Chan A.P."/>
            <person name="Thibaud-Nissen F."/>
            <person name="Schobel S."/>
            <person name="Town C.D."/>
        </authorList>
    </citation>
    <scope>GENOME REANNOTATION</scope>
    <source>
        <strain>cv. Columbia</strain>
    </source>
</reference>
<reference key="3">
    <citation type="submission" date="2004-11" db="EMBL/GenBank/DDBJ databases">
        <title>Arabidopsis ORF clones.</title>
        <authorList>
            <person name="Cheuk R.F."/>
            <person name="Chen H."/>
            <person name="Kim C.J."/>
            <person name="Shinn P."/>
            <person name="Ecker J.R."/>
        </authorList>
    </citation>
    <scope>NUCLEOTIDE SEQUENCE [LARGE SCALE MRNA]</scope>
    <source>
        <strain>cv. Columbia</strain>
    </source>
</reference>
<reference key="4">
    <citation type="submission" date="2004-09" db="EMBL/GenBank/DDBJ databases">
        <title>Large-scale analysis of RIKEN Arabidopsis full-length (RAFL) cDNAs.</title>
        <authorList>
            <person name="Totoki Y."/>
            <person name="Seki M."/>
            <person name="Ishida J."/>
            <person name="Nakajima M."/>
            <person name="Enju A."/>
            <person name="Kamiya A."/>
            <person name="Narusaka M."/>
            <person name="Shin-i T."/>
            <person name="Nakagawa M."/>
            <person name="Sakamoto N."/>
            <person name="Oishi K."/>
            <person name="Kohara Y."/>
            <person name="Kobayashi M."/>
            <person name="Toyoda A."/>
            <person name="Sakaki Y."/>
            <person name="Sakurai T."/>
            <person name="Iida K."/>
            <person name="Akiyama K."/>
            <person name="Satou M."/>
            <person name="Toyoda T."/>
            <person name="Konagaya A."/>
            <person name="Carninci P."/>
            <person name="Kawai J."/>
            <person name="Hayashizaki Y."/>
            <person name="Shinozaki K."/>
        </authorList>
    </citation>
    <scope>NUCLEOTIDE SEQUENCE [LARGE SCALE MRNA] OF 408-514</scope>
    <source>
        <strain>cv. Columbia</strain>
    </source>
</reference>
<reference key="5">
    <citation type="journal article" date="2005" name="Plant Cell">
        <title>Arabidopsis peroxisomal citrate synthase is required for fatty acid respiration and seed germination.</title>
        <authorList>
            <person name="Pracharoenwattana I."/>
            <person name="Cornah J.E."/>
            <person name="Smith S.M."/>
        </authorList>
    </citation>
    <scope>FUNCTION</scope>
    <scope>SUBCELLULAR LOCATION</scope>
    <scope>TISSUE SPECIFICITY</scope>
    <scope>DEVELOPMENTAL STAGE</scope>
</reference>
<protein>
    <recommendedName>
        <fullName>Citrate synthase 2, peroxisomal</fullName>
        <ecNumber>2.3.3.16</ecNumber>
    </recommendedName>
</protein>
<evidence type="ECO:0000255" key="1"/>
<evidence type="ECO:0000255" key="2">
    <source>
        <dbReference type="PROSITE-ProRule" id="PRU10117"/>
    </source>
</evidence>
<evidence type="ECO:0000269" key="3">
    <source>
    </source>
</evidence>
<evidence type="ECO:0000305" key="4"/>
<sequence length="514" mass="56603">MEISQRVKARLAVLTAHLAVSDTVGLEQVLPAIAPWCTSAHITAAPHGSLKGNLTIVDERTGKKYQVPVSEHGTVKAVDLKKITTGKDDKGLKLYDPGYLNTAPVRSSICYIDGDEGILRYRGYPIEELAESSTFIEVAYLLMYGNLPSQSQLADWEFTVSQHSAVPQGVLDIIQSMPHDAHPMGVLVSAMSALSIFHPDANPALSGQDIYKSKQVRDKQIVRILGKAPTIAAAAYLRTAGRPPVLPSANLSYSENFLYMLDSMGNRSYKPNPRLARVLDILFILHAEHEMNCSTAAARHLASSGVDVYTACAGAVGALYGPLHGGANEAVLKMLAEIGTAENIPDFIEGVKNRKRKMSGFGHRVYKNYDPRAKVIKKLADEVFSIVGRDPLIEVAVALEKAALSDEYFVKRKLYPNVDFYSGLIYRAMGFPPEFFTVLFAVPRMAGYLSHWRESLDDPDTRIMRPQQAYTGVWMRHYEPVRERTLSSDSDKDKFGQVSISNASRRRLAGSSAL</sequence>
<keyword id="KW-0576">Peroxisome</keyword>
<keyword id="KW-1185">Reference proteome</keyword>
<keyword id="KW-0808">Transferase</keyword>
<keyword id="KW-0809">Transit peptide</keyword>
<keyword id="KW-0816">Tricarboxylic acid cycle</keyword>
<comment type="function">
    <text evidence="3">Peroxisomal citrate synthase required for the fatty acid respiration in seedlings, citrate being exported from peroxisomes into mitochondria during respiration of triacylglycerol (TAG). Indeed, complete respiration requires the transfer of carbon in the form of citrate from the peroxisome to the mitochondria.</text>
</comment>
<comment type="catalytic activity">
    <reaction evidence="2">
        <text>oxaloacetate + acetyl-CoA + H2O = citrate + CoA + H(+)</text>
        <dbReference type="Rhea" id="RHEA:16845"/>
        <dbReference type="ChEBI" id="CHEBI:15377"/>
        <dbReference type="ChEBI" id="CHEBI:15378"/>
        <dbReference type="ChEBI" id="CHEBI:16452"/>
        <dbReference type="ChEBI" id="CHEBI:16947"/>
        <dbReference type="ChEBI" id="CHEBI:57287"/>
        <dbReference type="ChEBI" id="CHEBI:57288"/>
        <dbReference type="EC" id="2.3.3.16"/>
    </reaction>
</comment>
<comment type="pathway">
    <text>Carbohydrate metabolism; tricarboxylic acid cycle; isocitrate from oxaloacetate: step 1/2.</text>
</comment>
<comment type="subcellular location">
    <subcellularLocation>
        <location evidence="3">Peroxisome</location>
    </subcellularLocation>
</comment>
<comment type="tissue specificity">
    <text evidence="3">Widely expressed. Expressed throughout the shoot. Expressed in flower, silique, stem, cauline leaf, young leaf, mature leaf and senescent leaf.</text>
</comment>
<comment type="developmental stage">
    <text evidence="3">Expressed throughout seedling growth.</text>
</comment>
<comment type="miscellaneous">
    <text>Citrate synthase is found in nearly all cells capable of oxidative metabolism.</text>
</comment>
<comment type="similarity">
    <text evidence="4">Belongs to the citrate synthase family.</text>
</comment>
<comment type="sequence caution" evidence="4">
    <conflict type="erroneous initiation">
        <sequence resource="EMBL-CDS" id="BAD93857"/>
    </conflict>
</comment>
<feature type="transit peptide" description="Peroxisome" evidence="1">
    <location>
        <begin position="1"/>
        <end status="unknown"/>
    </location>
</feature>
<feature type="chain" id="PRO_0000005482" description="Citrate synthase 2, peroxisomal">
    <location>
        <begin status="unknown"/>
        <end position="514"/>
    </location>
</feature>
<feature type="active site" evidence="2">
    <location>
        <position position="324"/>
    </location>
</feature>
<feature type="active site" evidence="2">
    <location>
        <position position="363"/>
    </location>
</feature>
<feature type="active site" evidence="2">
    <location>
        <position position="419"/>
    </location>
</feature>
<organism>
    <name type="scientific">Arabidopsis thaliana</name>
    <name type="common">Mouse-ear cress</name>
    <dbReference type="NCBI Taxonomy" id="3702"/>
    <lineage>
        <taxon>Eukaryota</taxon>
        <taxon>Viridiplantae</taxon>
        <taxon>Streptophyta</taxon>
        <taxon>Embryophyta</taxon>
        <taxon>Tracheophyta</taxon>
        <taxon>Spermatophyta</taxon>
        <taxon>Magnoliopsida</taxon>
        <taxon>eudicotyledons</taxon>
        <taxon>Gunneridae</taxon>
        <taxon>Pentapetalae</taxon>
        <taxon>rosids</taxon>
        <taxon>malvids</taxon>
        <taxon>Brassicales</taxon>
        <taxon>Brassicaceae</taxon>
        <taxon>Camelineae</taxon>
        <taxon>Arabidopsis</taxon>
    </lineage>
</organism>
<dbReference type="EC" id="2.3.3.16"/>
<dbReference type="EMBL" id="AL353032">
    <property type="protein sequence ID" value="CAB88292.1"/>
    <property type="molecule type" value="Genomic_DNA"/>
</dbReference>
<dbReference type="EMBL" id="CP002686">
    <property type="protein sequence ID" value="AEE79826.1"/>
    <property type="molecule type" value="Genomic_DNA"/>
</dbReference>
<dbReference type="EMBL" id="BT015884">
    <property type="protein sequence ID" value="AAU95420.1"/>
    <property type="molecule type" value="mRNA"/>
</dbReference>
<dbReference type="EMBL" id="BT020195">
    <property type="protein sequence ID" value="AAV59261.1"/>
    <property type="molecule type" value="mRNA"/>
</dbReference>
<dbReference type="EMBL" id="AK220724">
    <property type="protein sequence ID" value="BAD93857.1"/>
    <property type="status" value="ALT_INIT"/>
    <property type="molecule type" value="mRNA"/>
</dbReference>
<dbReference type="PIR" id="T49158">
    <property type="entry name" value="T49158"/>
</dbReference>
<dbReference type="RefSeq" id="NP_191434.1">
    <property type="nucleotide sequence ID" value="NM_115737.3"/>
</dbReference>
<dbReference type="SMR" id="Q9LXS6"/>
<dbReference type="BioGRID" id="10359">
    <property type="interactions" value="25"/>
</dbReference>
<dbReference type="FunCoup" id="Q9LXS6">
    <property type="interactions" value="837"/>
</dbReference>
<dbReference type="IntAct" id="Q9LXS6">
    <property type="interactions" value="4"/>
</dbReference>
<dbReference type="STRING" id="3702.Q9LXS6"/>
<dbReference type="iPTMnet" id="Q9LXS6"/>
<dbReference type="PaxDb" id="3702-AT3G58750.1"/>
<dbReference type="ProteomicsDB" id="246695"/>
<dbReference type="EnsemblPlants" id="AT3G58750.1">
    <property type="protein sequence ID" value="AT3G58750.1"/>
    <property type="gene ID" value="AT3G58750"/>
</dbReference>
<dbReference type="GeneID" id="825044"/>
<dbReference type="Gramene" id="AT3G58750.1">
    <property type="protein sequence ID" value="AT3G58750.1"/>
    <property type="gene ID" value="AT3G58750"/>
</dbReference>
<dbReference type="KEGG" id="ath:AT3G58750"/>
<dbReference type="Araport" id="AT3G58750"/>
<dbReference type="TAIR" id="AT3G58750">
    <property type="gene designation" value="CSY2"/>
</dbReference>
<dbReference type="eggNOG" id="KOG2617">
    <property type="taxonomic scope" value="Eukaryota"/>
</dbReference>
<dbReference type="HOGENOM" id="CLU_025068_0_1_1"/>
<dbReference type="InParanoid" id="Q9LXS6"/>
<dbReference type="OMA" id="HWRQQML"/>
<dbReference type="PhylomeDB" id="Q9LXS6"/>
<dbReference type="BioCyc" id="ARA:AT3G58750-MONOMER"/>
<dbReference type="UniPathway" id="UPA00223">
    <property type="reaction ID" value="UER00717"/>
</dbReference>
<dbReference type="PRO" id="PR:Q9LXS6"/>
<dbReference type="Proteomes" id="UP000006548">
    <property type="component" value="Chromosome 3"/>
</dbReference>
<dbReference type="ExpressionAtlas" id="Q9LXS6">
    <property type="expression patterns" value="baseline and differential"/>
</dbReference>
<dbReference type="GO" id="GO:0005829">
    <property type="term" value="C:cytosol"/>
    <property type="evidence" value="ECO:0007005"/>
    <property type="project" value="TAIR"/>
</dbReference>
<dbReference type="GO" id="GO:0005777">
    <property type="term" value="C:peroxisome"/>
    <property type="evidence" value="ECO:0000314"/>
    <property type="project" value="TAIR"/>
</dbReference>
<dbReference type="GO" id="GO:0009506">
    <property type="term" value="C:plasmodesma"/>
    <property type="evidence" value="ECO:0007005"/>
    <property type="project" value="TAIR"/>
</dbReference>
<dbReference type="GO" id="GO:0099503">
    <property type="term" value="C:secretory vesicle"/>
    <property type="evidence" value="ECO:0007005"/>
    <property type="project" value="TAIR"/>
</dbReference>
<dbReference type="GO" id="GO:0004108">
    <property type="term" value="F:citrate (Si)-synthase activity"/>
    <property type="evidence" value="ECO:0000316"/>
    <property type="project" value="TAIR"/>
</dbReference>
<dbReference type="GO" id="GO:0006635">
    <property type="term" value="P:fatty acid beta-oxidation"/>
    <property type="evidence" value="ECO:0000316"/>
    <property type="project" value="TAIR"/>
</dbReference>
<dbReference type="GO" id="GO:0006099">
    <property type="term" value="P:tricarboxylic acid cycle"/>
    <property type="evidence" value="ECO:0007669"/>
    <property type="project" value="UniProtKB-UniPathway"/>
</dbReference>
<dbReference type="CDD" id="cd06115">
    <property type="entry name" value="AthCS_per_like"/>
    <property type="match status" value="1"/>
</dbReference>
<dbReference type="FunFam" id="1.10.230.10:FF:000002">
    <property type="entry name" value="Citrate synthase"/>
    <property type="match status" value="1"/>
</dbReference>
<dbReference type="FunFam" id="1.10.580.10:FF:000005">
    <property type="entry name" value="Citrate synthase"/>
    <property type="match status" value="1"/>
</dbReference>
<dbReference type="Gene3D" id="1.10.580.10">
    <property type="entry name" value="Citrate Synthase, domain 1"/>
    <property type="match status" value="1"/>
</dbReference>
<dbReference type="Gene3D" id="1.10.230.10">
    <property type="entry name" value="Cytochrome P450-Terp, domain 2"/>
    <property type="match status" value="1"/>
</dbReference>
<dbReference type="InterPro" id="IPR016142">
    <property type="entry name" value="Citrate_synth-like_lrg_a-sub"/>
</dbReference>
<dbReference type="InterPro" id="IPR016143">
    <property type="entry name" value="Citrate_synth-like_sm_a-sub"/>
</dbReference>
<dbReference type="InterPro" id="IPR002020">
    <property type="entry name" value="Citrate_synthase"/>
</dbReference>
<dbReference type="InterPro" id="IPR019810">
    <property type="entry name" value="Citrate_synthase_AS"/>
</dbReference>
<dbReference type="InterPro" id="IPR036969">
    <property type="entry name" value="Citrate_synthase_sf"/>
</dbReference>
<dbReference type="PANTHER" id="PTHR11739">
    <property type="entry name" value="CITRATE SYNTHASE"/>
    <property type="match status" value="1"/>
</dbReference>
<dbReference type="PANTHER" id="PTHR11739:SF27">
    <property type="entry name" value="CITRATE SYNTHASE 1, PEROXISOMAL-RELATED"/>
    <property type="match status" value="1"/>
</dbReference>
<dbReference type="Pfam" id="PF00285">
    <property type="entry name" value="Citrate_synt"/>
    <property type="match status" value="1"/>
</dbReference>
<dbReference type="PRINTS" id="PR00143">
    <property type="entry name" value="CITRTSNTHASE"/>
</dbReference>
<dbReference type="SUPFAM" id="SSF48256">
    <property type="entry name" value="Citrate synthase"/>
    <property type="match status" value="1"/>
</dbReference>
<dbReference type="PROSITE" id="PS00480">
    <property type="entry name" value="CITRATE_SYNTHASE"/>
    <property type="match status" value="1"/>
</dbReference>
<proteinExistence type="evidence at transcript level"/>
<accession>Q9LXS6</accession>
<accession>Q570I4</accession>